<dbReference type="EC" id="2.7.1.60" evidence="1"/>
<dbReference type="EMBL" id="CP000948">
    <property type="protein sequence ID" value="ACB04296.1"/>
    <property type="molecule type" value="Genomic_DNA"/>
</dbReference>
<dbReference type="RefSeq" id="WP_000209011.1">
    <property type="nucleotide sequence ID" value="NC_010473.1"/>
</dbReference>
<dbReference type="SMR" id="B1XHJ5"/>
<dbReference type="KEGG" id="ecd:ECDH10B_3399"/>
<dbReference type="HOGENOM" id="CLU_036604_0_4_6"/>
<dbReference type="UniPathway" id="UPA00629">
    <property type="reaction ID" value="UER00681"/>
</dbReference>
<dbReference type="GO" id="GO:0005524">
    <property type="term" value="F:ATP binding"/>
    <property type="evidence" value="ECO:0007669"/>
    <property type="project" value="UniProtKB-UniRule"/>
</dbReference>
<dbReference type="GO" id="GO:0009384">
    <property type="term" value="F:N-acylmannosamine kinase activity"/>
    <property type="evidence" value="ECO:0007669"/>
    <property type="project" value="UniProtKB-UniRule"/>
</dbReference>
<dbReference type="GO" id="GO:0008270">
    <property type="term" value="F:zinc ion binding"/>
    <property type="evidence" value="ECO:0007669"/>
    <property type="project" value="UniProtKB-UniRule"/>
</dbReference>
<dbReference type="GO" id="GO:0019262">
    <property type="term" value="P:N-acetylneuraminate catabolic process"/>
    <property type="evidence" value="ECO:0007669"/>
    <property type="project" value="UniProtKB-UniRule"/>
</dbReference>
<dbReference type="CDD" id="cd24069">
    <property type="entry name" value="ASKHA_NBD_ROK_EcNanK-like"/>
    <property type="match status" value="1"/>
</dbReference>
<dbReference type="FunFam" id="3.30.420.40:FF:000062">
    <property type="entry name" value="N-acetylmannosamine kinase"/>
    <property type="match status" value="1"/>
</dbReference>
<dbReference type="FunFam" id="3.30.420.40:FF:000063">
    <property type="entry name" value="N-acetylmannosamine kinase"/>
    <property type="match status" value="1"/>
</dbReference>
<dbReference type="Gene3D" id="3.30.420.40">
    <property type="match status" value="2"/>
</dbReference>
<dbReference type="HAMAP" id="MF_01234">
    <property type="entry name" value="ManNAc_kinase"/>
    <property type="match status" value="1"/>
</dbReference>
<dbReference type="InterPro" id="IPR043129">
    <property type="entry name" value="ATPase_NBD"/>
</dbReference>
<dbReference type="InterPro" id="IPR023945">
    <property type="entry name" value="ManNAc_kinase_bac"/>
</dbReference>
<dbReference type="InterPro" id="IPR000600">
    <property type="entry name" value="ROK"/>
</dbReference>
<dbReference type="InterPro" id="IPR049874">
    <property type="entry name" value="ROK_cs"/>
</dbReference>
<dbReference type="NCBIfam" id="NF047821">
    <property type="entry name" value="NactlManKinNanK"/>
    <property type="match status" value="1"/>
</dbReference>
<dbReference type="NCBIfam" id="NF003461">
    <property type="entry name" value="PRK05082.1"/>
    <property type="match status" value="1"/>
</dbReference>
<dbReference type="PANTHER" id="PTHR18964:SF169">
    <property type="entry name" value="N-ACETYLMANNOSAMINE KINASE"/>
    <property type="match status" value="1"/>
</dbReference>
<dbReference type="PANTHER" id="PTHR18964">
    <property type="entry name" value="ROK (REPRESSOR, ORF, KINASE) FAMILY"/>
    <property type="match status" value="1"/>
</dbReference>
<dbReference type="Pfam" id="PF00480">
    <property type="entry name" value="ROK"/>
    <property type="match status" value="1"/>
</dbReference>
<dbReference type="SUPFAM" id="SSF53067">
    <property type="entry name" value="Actin-like ATPase domain"/>
    <property type="match status" value="1"/>
</dbReference>
<dbReference type="PROSITE" id="PS01125">
    <property type="entry name" value="ROK"/>
    <property type="match status" value="1"/>
</dbReference>
<accession>B1XHJ5</accession>
<evidence type="ECO:0000255" key="1">
    <source>
        <dbReference type="HAMAP-Rule" id="MF_01234"/>
    </source>
</evidence>
<name>NANK_ECODH</name>
<organism>
    <name type="scientific">Escherichia coli (strain K12 / DH10B)</name>
    <dbReference type="NCBI Taxonomy" id="316385"/>
    <lineage>
        <taxon>Bacteria</taxon>
        <taxon>Pseudomonadati</taxon>
        <taxon>Pseudomonadota</taxon>
        <taxon>Gammaproteobacteria</taxon>
        <taxon>Enterobacterales</taxon>
        <taxon>Enterobacteriaceae</taxon>
        <taxon>Escherichia</taxon>
    </lineage>
</organism>
<feature type="chain" id="PRO_1000139684" description="N-acetylmannosamine kinase">
    <location>
        <begin position="1"/>
        <end position="291"/>
    </location>
</feature>
<feature type="binding site" evidence="1">
    <location>
        <begin position="5"/>
        <end position="12"/>
    </location>
    <ligand>
        <name>ATP</name>
        <dbReference type="ChEBI" id="CHEBI:30616"/>
    </ligand>
</feature>
<feature type="binding site" evidence="1">
    <location>
        <begin position="132"/>
        <end position="139"/>
    </location>
    <ligand>
        <name>ATP</name>
        <dbReference type="ChEBI" id="CHEBI:30616"/>
    </ligand>
</feature>
<feature type="binding site" evidence="1">
    <location>
        <position position="156"/>
    </location>
    <ligand>
        <name>Zn(2+)</name>
        <dbReference type="ChEBI" id="CHEBI:29105"/>
    </ligand>
</feature>
<feature type="binding site" evidence="1">
    <location>
        <position position="166"/>
    </location>
    <ligand>
        <name>Zn(2+)</name>
        <dbReference type="ChEBI" id="CHEBI:29105"/>
    </ligand>
</feature>
<feature type="binding site" evidence="1">
    <location>
        <position position="168"/>
    </location>
    <ligand>
        <name>Zn(2+)</name>
        <dbReference type="ChEBI" id="CHEBI:29105"/>
    </ligand>
</feature>
<feature type="binding site" evidence="1">
    <location>
        <position position="173"/>
    </location>
    <ligand>
        <name>Zn(2+)</name>
        <dbReference type="ChEBI" id="CHEBI:29105"/>
    </ligand>
</feature>
<gene>
    <name evidence="1" type="primary">nanK</name>
    <name type="ordered locus">ECDH10B_3399</name>
</gene>
<proteinExistence type="inferred from homology"/>
<comment type="function">
    <text evidence="1">Catalyzes the phosphorylation of N-acetylmannosamine (ManNAc) to ManNAc-6-P.</text>
</comment>
<comment type="catalytic activity">
    <reaction evidence="1">
        <text>an N-acyl-D-mannosamine + ATP = an N-acyl-D-mannosamine 6-phosphate + ADP + H(+)</text>
        <dbReference type="Rhea" id="RHEA:23832"/>
        <dbReference type="ChEBI" id="CHEBI:15378"/>
        <dbReference type="ChEBI" id="CHEBI:16062"/>
        <dbReference type="ChEBI" id="CHEBI:30616"/>
        <dbReference type="ChEBI" id="CHEBI:57666"/>
        <dbReference type="ChEBI" id="CHEBI:456216"/>
        <dbReference type="EC" id="2.7.1.60"/>
    </reaction>
</comment>
<comment type="pathway">
    <text evidence="1">Amino-sugar metabolism; N-acetylneuraminate degradation; D-fructose 6-phosphate from N-acetylneuraminate: step 2/5.</text>
</comment>
<comment type="subunit">
    <text evidence="1">Homodimer.</text>
</comment>
<comment type="similarity">
    <text evidence="1">Belongs to the ROK (NagC/XylR) family. NanK subfamily.</text>
</comment>
<reference key="1">
    <citation type="journal article" date="2008" name="J. Bacteriol.">
        <title>The complete genome sequence of Escherichia coli DH10B: insights into the biology of a laboratory workhorse.</title>
        <authorList>
            <person name="Durfee T."/>
            <person name="Nelson R."/>
            <person name="Baldwin S."/>
            <person name="Plunkett G. III"/>
            <person name="Burland V."/>
            <person name="Mau B."/>
            <person name="Petrosino J.F."/>
            <person name="Qin X."/>
            <person name="Muzny D.M."/>
            <person name="Ayele M."/>
            <person name="Gibbs R.A."/>
            <person name="Csorgo B."/>
            <person name="Posfai G."/>
            <person name="Weinstock G.M."/>
            <person name="Blattner F.R."/>
        </authorList>
    </citation>
    <scope>NUCLEOTIDE SEQUENCE [LARGE SCALE GENOMIC DNA]</scope>
    <source>
        <strain>K12 / DH10B</strain>
    </source>
</reference>
<keyword id="KW-0067">ATP-binding</keyword>
<keyword id="KW-0119">Carbohydrate metabolism</keyword>
<keyword id="KW-0418">Kinase</keyword>
<keyword id="KW-0479">Metal-binding</keyword>
<keyword id="KW-0547">Nucleotide-binding</keyword>
<keyword id="KW-0808">Transferase</keyword>
<keyword id="KW-0862">Zinc</keyword>
<sequence>MTTLAIDIGGTKLAAALIGADGQIRDRRELPTPASQTPEALRDALSALVSPLQAHAQRVAIASTGIIRDGSLLALNPHNLGGLLHFPLVKTLEQLTNLPTIAINDAQAAAWAEFQALDGDITDMVFITVSTGVGGGVVSGCKLLTGPGGLAGHIGHTLADPHGPVCGCGRTGCVEAIASGRGIAAAAQGELAGADAKTIFTRAGQGDEQAQQLIHRSARTLARLIADIKATTDCQCVVVGGSVGLAEGYLALVETYLAQEPAAFHVDLLAAHYRHDAGLLGAALLAQGEKL</sequence>
<protein>
    <recommendedName>
        <fullName evidence="1">N-acetylmannosamine kinase</fullName>
        <ecNumber evidence="1">2.7.1.60</ecNumber>
    </recommendedName>
    <alternativeName>
        <fullName evidence="1">ManNAc kinase</fullName>
    </alternativeName>
    <alternativeName>
        <fullName evidence="1">N-acetyl-D-mannosamine kinase</fullName>
    </alternativeName>
</protein>